<evidence type="ECO:0000255" key="1">
    <source>
        <dbReference type="HAMAP-Rule" id="MF_01342"/>
    </source>
</evidence>
<evidence type="ECO:0000305" key="2"/>
<proteinExistence type="inferred from homology"/>
<geneLocation type="chloroplast"/>
<comment type="subunit">
    <text evidence="1">Part of the 50S ribosomal subunit.</text>
</comment>
<comment type="subcellular location">
    <subcellularLocation>
        <location>Plastid</location>
        <location>Chloroplast</location>
    </subcellularLocation>
</comment>
<comment type="similarity">
    <text evidence="1">Belongs to the universal ribosomal protein uL16 family.</text>
</comment>
<gene>
    <name evidence="1" type="primary">rpl16</name>
</gene>
<dbReference type="EMBL" id="AP009373">
    <property type="protein sequence ID" value="BAF50411.1"/>
    <property type="molecule type" value="Genomic_DNA"/>
</dbReference>
<dbReference type="RefSeq" id="YP_001123587.1">
    <property type="nucleotide sequence ID" value="NC_009272.1"/>
</dbReference>
<dbReference type="SMR" id="A4QL56"/>
<dbReference type="GeneID" id="4964681"/>
<dbReference type="GO" id="GO:0009507">
    <property type="term" value="C:chloroplast"/>
    <property type="evidence" value="ECO:0007669"/>
    <property type="project" value="UniProtKB-SubCell"/>
</dbReference>
<dbReference type="GO" id="GO:0005762">
    <property type="term" value="C:mitochondrial large ribosomal subunit"/>
    <property type="evidence" value="ECO:0007669"/>
    <property type="project" value="TreeGrafter"/>
</dbReference>
<dbReference type="GO" id="GO:0019843">
    <property type="term" value="F:rRNA binding"/>
    <property type="evidence" value="ECO:0007669"/>
    <property type="project" value="InterPro"/>
</dbReference>
<dbReference type="GO" id="GO:0003735">
    <property type="term" value="F:structural constituent of ribosome"/>
    <property type="evidence" value="ECO:0007669"/>
    <property type="project" value="InterPro"/>
</dbReference>
<dbReference type="GO" id="GO:0032543">
    <property type="term" value="P:mitochondrial translation"/>
    <property type="evidence" value="ECO:0007669"/>
    <property type="project" value="TreeGrafter"/>
</dbReference>
<dbReference type="CDD" id="cd01433">
    <property type="entry name" value="Ribosomal_L16_L10e"/>
    <property type="match status" value="1"/>
</dbReference>
<dbReference type="FunFam" id="3.90.1170.10:FF:000001">
    <property type="entry name" value="50S ribosomal protein L16"/>
    <property type="match status" value="1"/>
</dbReference>
<dbReference type="Gene3D" id="3.90.1170.10">
    <property type="entry name" value="Ribosomal protein L10e/L16"/>
    <property type="match status" value="1"/>
</dbReference>
<dbReference type="HAMAP" id="MF_01342">
    <property type="entry name" value="Ribosomal_uL16"/>
    <property type="match status" value="1"/>
</dbReference>
<dbReference type="InterPro" id="IPR047873">
    <property type="entry name" value="Ribosomal_uL16"/>
</dbReference>
<dbReference type="InterPro" id="IPR000114">
    <property type="entry name" value="Ribosomal_uL16_bact-type"/>
</dbReference>
<dbReference type="InterPro" id="IPR020798">
    <property type="entry name" value="Ribosomal_uL16_CS"/>
</dbReference>
<dbReference type="InterPro" id="IPR016180">
    <property type="entry name" value="Ribosomal_uL16_dom"/>
</dbReference>
<dbReference type="InterPro" id="IPR036920">
    <property type="entry name" value="Ribosomal_uL16_sf"/>
</dbReference>
<dbReference type="NCBIfam" id="TIGR01164">
    <property type="entry name" value="rplP_bact"/>
    <property type="match status" value="1"/>
</dbReference>
<dbReference type="PANTHER" id="PTHR12220">
    <property type="entry name" value="50S/60S RIBOSOMAL PROTEIN L16"/>
    <property type="match status" value="1"/>
</dbReference>
<dbReference type="PANTHER" id="PTHR12220:SF13">
    <property type="entry name" value="LARGE RIBOSOMAL SUBUNIT PROTEIN UL16M"/>
    <property type="match status" value="1"/>
</dbReference>
<dbReference type="Pfam" id="PF00252">
    <property type="entry name" value="Ribosomal_L16"/>
    <property type="match status" value="1"/>
</dbReference>
<dbReference type="PRINTS" id="PR00060">
    <property type="entry name" value="RIBOSOMALL16"/>
</dbReference>
<dbReference type="SUPFAM" id="SSF54686">
    <property type="entry name" value="Ribosomal protein L16p/L10e"/>
    <property type="match status" value="1"/>
</dbReference>
<dbReference type="PROSITE" id="PS00586">
    <property type="entry name" value="RIBOSOMAL_L16_1"/>
    <property type="match status" value="1"/>
</dbReference>
<dbReference type="PROSITE" id="PS00701">
    <property type="entry name" value="RIBOSOMAL_L16_2"/>
    <property type="match status" value="1"/>
</dbReference>
<keyword id="KW-0150">Chloroplast</keyword>
<keyword id="KW-0934">Plastid</keyword>
<keyword id="KW-0687">Ribonucleoprotein</keyword>
<keyword id="KW-0689">Ribosomal protein</keyword>
<feature type="chain" id="PRO_0000354633" description="Large ribosomal subunit protein uL16c">
    <location>
        <begin position="1"/>
        <end position="135"/>
    </location>
</feature>
<reference key="1">
    <citation type="submission" date="2007-03" db="EMBL/GenBank/DDBJ databases">
        <title>Sequencing analysis of Draba nemoroza chloroplast DNA.</title>
        <authorList>
            <person name="Hosouchi T."/>
            <person name="Tsuruoka H."/>
            <person name="Kotani H."/>
        </authorList>
    </citation>
    <scope>NUCLEOTIDE SEQUENCE [LARGE SCALE GENOMIC DNA]</scope>
</reference>
<accession>A4QL56</accession>
<protein>
    <recommendedName>
        <fullName evidence="1">Large ribosomal subunit protein uL16c</fullName>
    </recommendedName>
    <alternativeName>
        <fullName evidence="2">50S ribosomal protein L16, chloroplastic</fullName>
    </alternativeName>
</protein>
<sequence>MLSPKRTRFRKQHRGRLKGISSRGNRICFGRYALQTLEPAWITSRQIEAGRRAMTRNVRRGGKIWVRIFPDKPVTVRPAETRMGSGKGSPEYWVAVVKPGKILYEMGGVPENIARKAISIAASKMPIKTQFIISE</sequence>
<organism>
    <name type="scientific">Draba nemorosa</name>
    <name type="common">Woodland whitlowgrass</name>
    <dbReference type="NCBI Taxonomy" id="171822"/>
    <lineage>
        <taxon>Eukaryota</taxon>
        <taxon>Viridiplantae</taxon>
        <taxon>Streptophyta</taxon>
        <taxon>Embryophyta</taxon>
        <taxon>Tracheophyta</taxon>
        <taxon>Spermatophyta</taxon>
        <taxon>Magnoliopsida</taxon>
        <taxon>eudicotyledons</taxon>
        <taxon>Gunneridae</taxon>
        <taxon>Pentapetalae</taxon>
        <taxon>rosids</taxon>
        <taxon>malvids</taxon>
        <taxon>Brassicales</taxon>
        <taxon>Brassicaceae</taxon>
        <taxon>Arabideae</taxon>
        <taxon>Draba</taxon>
    </lineage>
</organism>
<name>RK16_DRANE</name>